<keyword id="KW-0963">Cytoplasm</keyword>
<keyword id="KW-0448">Lipopolysaccharide biosynthesis</keyword>
<keyword id="KW-0548">Nucleotidyltransferase</keyword>
<keyword id="KW-0808">Transferase</keyword>
<name>KDSB_BART1</name>
<reference key="1">
    <citation type="journal article" date="2007" name="Nat. Genet.">
        <title>Genomic analysis of Bartonella identifies type IV secretion systems as host adaptability factors.</title>
        <authorList>
            <person name="Saenz H.L."/>
            <person name="Engel P."/>
            <person name="Stoeckli M.C."/>
            <person name="Lanz C."/>
            <person name="Raddatz G."/>
            <person name="Vayssier-Taussat M."/>
            <person name="Birtles R."/>
            <person name="Schuster S.C."/>
            <person name="Dehio C."/>
        </authorList>
    </citation>
    <scope>NUCLEOTIDE SEQUENCE [LARGE SCALE GENOMIC DNA]</scope>
    <source>
        <strain>CIP 105476 / IBS 506</strain>
    </source>
</reference>
<organism>
    <name type="scientific">Bartonella tribocorum (strain CIP 105476 / IBS 506)</name>
    <dbReference type="NCBI Taxonomy" id="382640"/>
    <lineage>
        <taxon>Bacteria</taxon>
        <taxon>Pseudomonadati</taxon>
        <taxon>Pseudomonadota</taxon>
        <taxon>Alphaproteobacteria</taxon>
        <taxon>Hyphomicrobiales</taxon>
        <taxon>Bartonellaceae</taxon>
        <taxon>Bartonella</taxon>
    </lineage>
</organism>
<dbReference type="EC" id="2.7.7.38" evidence="1"/>
<dbReference type="EMBL" id="AM260525">
    <property type="protein sequence ID" value="CAK00735.1"/>
    <property type="molecule type" value="Genomic_DNA"/>
</dbReference>
<dbReference type="RefSeq" id="WP_012230672.1">
    <property type="nucleotide sequence ID" value="NC_010161.1"/>
</dbReference>
<dbReference type="SMR" id="A9IMZ3"/>
<dbReference type="KEGG" id="btr:BT_0262"/>
<dbReference type="eggNOG" id="COG1212">
    <property type="taxonomic scope" value="Bacteria"/>
</dbReference>
<dbReference type="HOGENOM" id="CLU_065038_0_1_5"/>
<dbReference type="UniPathway" id="UPA00030"/>
<dbReference type="UniPathway" id="UPA00358">
    <property type="reaction ID" value="UER00476"/>
</dbReference>
<dbReference type="Proteomes" id="UP000001592">
    <property type="component" value="Chromosome"/>
</dbReference>
<dbReference type="GO" id="GO:0005829">
    <property type="term" value="C:cytosol"/>
    <property type="evidence" value="ECO:0007669"/>
    <property type="project" value="TreeGrafter"/>
</dbReference>
<dbReference type="GO" id="GO:0008690">
    <property type="term" value="F:3-deoxy-manno-octulosonate cytidylyltransferase activity"/>
    <property type="evidence" value="ECO:0007669"/>
    <property type="project" value="UniProtKB-UniRule"/>
</dbReference>
<dbReference type="GO" id="GO:0033468">
    <property type="term" value="P:CMP-keto-3-deoxy-D-manno-octulosonic acid biosynthetic process"/>
    <property type="evidence" value="ECO:0007669"/>
    <property type="project" value="UniProtKB-UniRule"/>
</dbReference>
<dbReference type="GO" id="GO:0009103">
    <property type="term" value="P:lipopolysaccharide biosynthetic process"/>
    <property type="evidence" value="ECO:0007669"/>
    <property type="project" value="UniProtKB-UniRule"/>
</dbReference>
<dbReference type="CDD" id="cd02517">
    <property type="entry name" value="CMP-KDO-Synthetase"/>
    <property type="match status" value="1"/>
</dbReference>
<dbReference type="Gene3D" id="3.90.550.10">
    <property type="entry name" value="Spore Coat Polysaccharide Biosynthesis Protein SpsA, Chain A"/>
    <property type="match status" value="1"/>
</dbReference>
<dbReference type="HAMAP" id="MF_00057">
    <property type="entry name" value="KdsB"/>
    <property type="match status" value="1"/>
</dbReference>
<dbReference type="InterPro" id="IPR003329">
    <property type="entry name" value="Cytidylyl_trans"/>
</dbReference>
<dbReference type="InterPro" id="IPR004528">
    <property type="entry name" value="KdsB"/>
</dbReference>
<dbReference type="InterPro" id="IPR029044">
    <property type="entry name" value="Nucleotide-diphossugar_trans"/>
</dbReference>
<dbReference type="NCBIfam" id="TIGR00466">
    <property type="entry name" value="kdsB"/>
    <property type="match status" value="1"/>
</dbReference>
<dbReference type="NCBIfam" id="NF003948">
    <property type="entry name" value="PRK05450.1-1"/>
    <property type="match status" value="1"/>
</dbReference>
<dbReference type="NCBIfam" id="NF003952">
    <property type="entry name" value="PRK05450.1-5"/>
    <property type="match status" value="1"/>
</dbReference>
<dbReference type="PANTHER" id="PTHR42866">
    <property type="entry name" value="3-DEOXY-MANNO-OCTULOSONATE CYTIDYLYLTRANSFERASE"/>
    <property type="match status" value="1"/>
</dbReference>
<dbReference type="PANTHER" id="PTHR42866:SF2">
    <property type="entry name" value="3-DEOXY-MANNO-OCTULOSONATE CYTIDYLYLTRANSFERASE, MITOCHONDRIAL"/>
    <property type="match status" value="1"/>
</dbReference>
<dbReference type="Pfam" id="PF02348">
    <property type="entry name" value="CTP_transf_3"/>
    <property type="match status" value="1"/>
</dbReference>
<dbReference type="SUPFAM" id="SSF53448">
    <property type="entry name" value="Nucleotide-diphospho-sugar transferases"/>
    <property type="match status" value="1"/>
</dbReference>
<sequence>MALEPIILIPARMGSTRLPQKALAEISGKPMIVHVAEQAKKAAIGRTIVATDHNDIAKAVAEYGHEYIITRGDHKSGSDRIYEALMRIDPEQRYNAILNIQGDLPTIMPREIIHALRPLENSFTDIATLGSQIIEESEKRDPNVVKIIGTPLSQNRLRALYFTRTTSPYGDGPLYHHIGIYAYRREALEKFVSFKPSTLEIREKLEQLRALEHNMRIDVEIVDTIPLGVDTQRDLERVRKILA</sequence>
<evidence type="ECO:0000255" key="1">
    <source>
        <dbReference type="HAMAP-Rule" id="MF_00057"/>
    </source>
</evidence>
<comment type="function">
    <text evidence="1">Activates KDO (a required 8-carbon sugar) for incorporation into bacterial lipopolysaccharide in Gram-negative bacteria.</text>
</comment>
<comment type="catalytic activity">
    <reaction evidence="1">
        <text>3-deoxy-alpha-D-manno-oct-2-ulosonate + CTP = CMP-3-deoxy-beta-D-manno-octulosonate + diphosphate</text>
        <dbReference type="Rhea" id="RHEA:23448"/>
        <dbReference type="ChEBI" id="CHEBI:33019"/>
        <dbReference type="ChEBI" id="CHEBI:37563"/>
        <dbReference type="ChEBI" id="CHEBI:85986"/>
        <dbReference type="ChEBI" id="CHEBI:85987"/>
        <dbReference type="EC" id="2.7.7.38"/>
    </reaction>
</comment>
<comment type="pathway">
    <text evidence="1">Nucleotide-sugar biosynthesis; CMP-3-deoxy-D-manno-octulosonate biosynthesis; CMP-3-deoxy-D-manno-octulosonate from 3-deoxy-D-manno-octulosonate and CTP: step 1/1.</text>
</comment>
<comment type="pathway">
    <text evidence="1">Bacterial outer membrane biogenesis; lipopolysaccharide biosynthesis.</text>
</comment>
<comment type="subcellular location">
    <subcellularLocation>
        <location evidence="1">Cytoplasm</location>
    </subcellularLocation>
</comment>
<comment type="similarity">
    <text evidence="1">Belongs to the KdsB family.</text>
</comment>
<proteinExistence type="inferred from homology"/>
<protein>
    <recommendedName>
        <fullName evidence="1">3-deoxy-manno-octulosonate cytidylyltransferase</fullName>
        <ecNumber evidence="1">2.7.7.38</ecNumber>
    </recommendedName>
    <alternativeName>
        <fullName evidence="1">CMP-2-keto-3-deoxyoctulosonic acid synthase</fullName>
        <shortName evidence="1">CKS</shortName>
        <shortName evidence="1">CMP-KDO synthase</shortName>
    </alternativeName>
</protein>
<accession>A9IMZ3</accession>
<gene>
    <name evidence="1" type="primary">kdsB</name>
    <name type="ordered locus">BT_0262</name>
</gene>
<feature type="chain" id="PRO_0000370003" description="3-deoxy-manno-octulosonate cytidylyltransferase">
    <location>
        <begin position="1"/>
        <end position="243"/>
    </location>
</feature>